<organism>
    <name type="scientific">Xylella fastidiosa (strain M23)</name>
    <dbReference type="NCBI Taxonomy" id="405441"/>
    <lineage>
        <taxon>Bacteria</taxon>
        <taxon>Pseudomonadati</taxon>
        <taxon>Pseudomonadota</taxon>
        <taxon>Gammaproteobacteria</taxon>
        <taxon>Lysobacterales</taxon>
        <taxon>Lysobacteraceae</taxon>
        <taxon>Xylella</taxon>
    </lineage>
</organism>
<dbReference type="EC" id="1.1.1.37" evidence="1"/>
<dbReference type="EMBL" id="CP001011">
    <property type="protein sequence ID" value="ACB91932.1"/>
    <property type="molecule type" value="Genomic_DNA"/>
</dbReference>
<dbReference type="RefSeq" id="WP_012382472.1">
    <property type="nucleotide sequence ID" value="NC_010577.1"/>
</dbReference>
<dbReference type="SMR" id="B2I8M1"/>
<dbReference type="KEGG" id="xfn:XfasM23_0485"/>
<dbReference type="HOGENOM" id="CLU_040727_2_0_6"/>
<dbReference type="Proteomes" id="UP000001698">
    <property type="component" value="Chromosome"/>
</dbReference>
<dbReference type="GO" id="GO:0030060">
    <property type="term" value="F:L-malate dehydrogenase (NAD+) activity"/>
    <property type="evidence" value="ECO:0007669"/>
    <property type="project" value="UniProtKB-UniRule"/>
</dbReference>
<dbReference type="GO" id="GO:0006108">
    <property type="term" value="P:malate metabolic process"/>
    <property type="evidence" value="ECO:0007669"/>
    <property type="project" value="InterPro"/>
</dbReference>
<dbReference type="GO" id="GO:0006099">
    <property type="term" value="P:tricarboxylic acid cycle"/>
    <property type="evidence" value="ECO:0007669"/>
    <property type="project" value="UniProtKB-UniRule"/>
</dbReference>
<dbReference type="CDD" id="cd01338">
    <property type="entry name" value="MDH_chloroplast-like"/>
    <property type="match status" value="1"/>
</dbReference>
<dbReference type="FunFam" id="3.40.50.720:FF:000010">
    <property type="entry name" value="Malate dehydrogenase"/>
    <property type="match status" value="1"/>
</dbReference>
<dbReference type="FunFam" id="3.90.110.10:FF:000002">
    <property type="entry name" value="Malate dehydrogenase"/>
    <property type="match status" value="1"/>
</dbReference>
<dbReference type="Gene3D" id="3.90.110.10">
    <property type="entry name" value="Lactate dehydrogenase/glycoside hydrolase, family 4, C-terminal"/>
    <property type="match status" value="1"/>
</dbReference>
<dbReference type="Gene3D" id="3.40.50.720">
    <property type="entry name" value="NAD(P)-binding Rossmann-like Domain"/>
    <property type="match status" value="1"/>
</dbReference>
<dbReference type="HAMAP" id="MF_01517">
    <property type="entry name" value="Malate_dehydrog_2"/>
    <property type="match status" value="1"/>
</dbReference>
<dbReference type="InterPro" id="IPR001557">
    <property type="entry name" value="L-lactate/malate_DH"/>
</dbReference>
<dbReference type="InterPro" id="IPR022383">
    <property type="entry name" value="Lactate/malate_DH_C"/>
</dbReference>
<dbReference type="InterPro" id="IPR001236">
    <property type="entry name" value="Lactate/malate_DH_N"/>
</dbReference>
<dbReference type="InterPro" id="IPR015955">
    <property type="entry name" value="Lactate_DH/Glyco_Ohase_4_C"/>
</dbReference>
<dbReference type="InterPro" id="IPR010945">
    <property type="entry name" value="Malate_DH_type2"/>
</dbReference>
<dbReference type="InterPro" id="IPR036291">
    <property type="entry name" value="NAD(P)-bd_dom_sf"/>
</dbReference>
<dbReference type="NCBIfam" id="TIGR01759">
    <property type="entry name" value="MalateDH-SF1"/>
    <property type="match status" value="1"/>
</dbReference>
<dbReference type="NCBIfam" id="NF003916">
    <property type="entry name" value="PRK05442.1"/>
    <property type="match status" value="1"/>
</dbReference>
<dbReference type="PANTHER" id="PTHR23382">
    <property type="entry name" value="MALATE DEHYDROGENASE"/>
    <property type="match status" value="1"/>
</dbReference>
<dbReference type="Pfam" id="PF02866">
    <property type="entry name" value="Ldh_1_C"/>
    <property type="match status" value="1"/>
</dbReference>
<dbReference type="Pfam" id="PF00056">
    <property type="entry name" value="Ldh_1_N"/>
    <property type="match status" value="1"/>
</dbReference>
<dbReference type="PIRSF" id="PIRSF000102">
    <property type="entry name" value="Lac_mal_DH"/>
    <property type="match status" value="1"/>
</dbReference>
<dbReference type="SUPFAM" id="SSF56327">
    <property type="entry name" value="LDH C-terminal domain-like"/>
    <property type="match status" value="1"/>
</dbReference>
<dbReference type="SUPFAM" id="SSF51735">
    <property type="entry name" value="NAD(P)-binding Rossmann-fold domains"/>
    <property type="match status" value="1"/>
</dbReference>
<feature type="chain" id="PRO_1000191635" description="Malate dehydrogenase">
    <location>
        <begin position="1"/>
        <end position="328"/>
    </location>
</feature>
<feature type="active site" description="Proton acceptor" evidence="1">
    <location>
        <position position="189"/>
    </location>
</feature>
<feature type="binding site" evidence="1">
    <location>
        <begin position="11"/>
        <end position="17"/>
    </location>
    <ligand>
        <name>NAD(+)</name>
        <dbReference type="ChEBI" id="CHEBI:57540"/>
    </ligand>
</feature>
<feature type="binding site" evidence="1">
    <location>
        <position position="94"/>
    </location>
    <ligand>
        <name>substrate</name>
    </ligand>
</feature>
<feature type="binding site" evidence="1">
    <location>
        <position position="100"/>
    </location>
    <ligand>
        <name>substrate</name>
    </ligand>
</feature>
<feature type="binding site" evidence="1">
    <location>
        <position position="107"/>
    </location>
    <ligand>
        <name>NAD(+)</name>
        <dbReference type="ChEBI" id="CHEBI:57540"/>
    </ligand>
</feature>
<feature type="binding site" evidence="1">
    <location>
        <position position="114"/>
    </location>
    <ligand>
        <name>NAD(+)</name>
        <dbReference type="ChEBI" id="CHEBI:57540"/>
    </ligand>
</feature>
<feature type="binding site" evidence="1">
    <location>
        <begin position="131"/>
        <end position="133"/>
    </location>
    <ligand>
        <name>NAD(+)</name>
        <dbReference type="ChEBI" id="CHEBI:57540"/>
    </ligand>
</feature>
<feature type="binding site" evidence="1">
    <location>
        <position position="133"/>
    </location>
    <ligand>
        <name>substrate</name>
    </ligand>
</feature>
<feature type="binding site" evidence="1">
    <location>
        <position position="164"/>
    </location>
    <ligand>
        <name>substrate</name>
    </ligand>
</feature>
<evidence type="ECO:0000255" key="1">
    <source>
        <dbReference type="HAMAP-Rule" id="MF_01517"/>
    </source>
</evidence>
<gene>
    <name evidence="1" type="primary">mdh</name>
    <name type="ordered locus">XfasM23_0485</name>
</gene>
<proteinExistence type="inferred from homology"/>
<comment type="function">
    <text evidence="1">Catalyzes the reversible oxidation of malate to oxaloacetate.</text>
</comment>
<comment type="catalytic activity">
    <reaction evidence="1">
        <text>(S)-malate + NAD(+) = oxaloacetate + NADH + H(+)</text>
        <dbReference type="Rhea" id="RHEA:21432"/>
        <dbReference type="ChEBI" id="CHEBI:15378"/>
        <dbReference type="ChEBI" id="CHEBI:15589"/>
        <dbReference type="ChEBI" id="CHEBI:16452"/>
        <dbReference type="ChEBI" id="CHEBI:57540"/>
        <dbReference type="ChEBI" id="CHEBI:57945"/>
        <dbReference type="EC" id="1.1.1.37"/>
    </reaction>
</comment>
<comment type="similarity">
    <text evidence="1">Belongs to the LDH/MDH superfamily. MDH type 2 family.</text>
</comment>
<protein>
    <recommendedName>
        <fullName evidence="1">Malate dehydrogenase</fullName>
        <ecNumber evidence="1">1.1.1.37</ecNumber>
    </recommendedName>
</protein>
<sequence>MKALVRVAVTGAAGQIGYSLLFRIAAGEMFGKDRPVILQMLELPDEKAQAALKGVMMELEDCAFPLLAGMVVTDNPDIAFKDADAALLVGSRPRGPGMERKDLLMENAKIFTAQGAALNKVARRDVKVLVVGNPANTNAYIAMKSAPDLNPKHFTAMLRLDHNRALSQLSTKLGKPVANIEKLIVWGNHSPTMYPDYRFATADGTPIIEAINDQAWNANSFIPTVSKRGAAIIEARGLSSAASAANAAIDHMRDWLLGSNGKWITMGVPSDGSYGIPEGMIFGFPVTTTNGEYSIVKDLPIDTFSKTYIDKTLAELEEERASIAHLLR</sequence>
<name>MDH_XYLF2</name>
<keyword id="KW-0520">NAD</keyword>
<keyword id="KW-0560">Oxidoreductase</keyword>
<keyword id="KW-0816">Tricarboxylic acid cycle</keyword>
<reference key="1">
    <citation type="journal article" date="2010" name="J. Bacteriol.">
        <title>Whole genome sequences of two Xylella fastidiosa strains (M12 and M23) causing almond leaf scorch disease in California.</title>
        <authorList>
            <person name="Chen J."/>
            <person name="Xie G."/>
            <person name="Han S."/>
            <person name="Chertkov O."/>
            <person name="Sims D."/>
            <person name="Civerolo E.L."/>
        </authorList>
    </citation>
    <scope>NUCLEOTIDE SEQUENCE [LARGE SCALE GENOMIC DNA]</scope>
    <source>
        <strain>M23</strain>
    </source>
</reference>
<accession>B2I8M1</accession>